<name>CSPLB_SORBI</name>
<evidence type="ECO:0000250" key="1"/>
<evidence type="ECO:0000255" key="2"/>
<evidence type="ECO:0000305" key="3"/>
<accession>C5Y376</accession>
<sequence length="189" mass="19467">MFGSDDSGCHVMDDDVAPPANGSKAVTLLLRLITLALALTSAVLMATASECTIYGLDGATATTVTFKDYQPFIYLVGSNIAATILEVAAIYVQVGKGDDVEDAPMIPRVVLVVVDVAVQMLLYSATGAVFAAVMAYGPQISACTGAAGHFCEQVQRSKIISLAASLSAVLAAVAKDVALPCSVWPHPSS</sequence>
<feature type="chain" id="PRO_0000391537" description="CASP-like protein 1U2">
    <location>
        <begin position="1"/>
        <end position="189"/>
    </location>
</feature>
<feature type="topological domain" description="Cytoplasmic" evidence="2">
    <location>
        <begin position="1"/>
        <end position="24"/>
    </location>
</feature>
<feature type="transmembrane region" description="Helical" evidence="2">
    <location>
        <begin position="25"/>
        <end position="45"/>
    </location>
</feature>
<feature type="topological domain" description="Extracellular" evidence="2">
    <location>
        <begin position="46"/>
        <end position="71"/>
    </location>
</feature>
<feature type="transmembrane region" description="Helical" evidence="2">
    <location>
        <begin position="72"/>
        <end position="92"/>
    </location>
</feature>
<feature type="topological domain" description="Cytoplasmic" evidence="2">
    <location>
        <begin position="93"/>
        <end position="109"/>
    </location>
</feature>
<feature type="transmembrane region" description="Helical" evidence="2">
    <location>
        <begin position="110"/>
        <end position="130"/>
    </location>
</feature>
<feature type="topological domain" description="Extracellular" evidence="2">
    <location>
        <begin position="131"/>
        <end position="158"/>
    </location>
</feature>
<feature type="transmembrane region" description="Helical" evidence="2">
    <location>
        <begin position="159"/>
        <end position="179"/>
    </location>
</feature>
<feature type="topological domain" description="Cytoplasmic" evidence="2">
    <location>
        <begin position="180"/>
        <end position="189"/>
    </location>
</feature>
<keyword id="KW-1003">Cell membrane</keyword>
<keyword id="KW-0472">Membrane</keyword>
<keyword id="KW-1185">Reference proteome</keyword>
<keyword id="KW-0812">Transmembrane</keyword>
<keyword id="KW-1133">Transmembrane helix</keyword>
<reference key="1">
    <citation type="journal article" date="2009" name="Nature">
        <title>The Sorghum bicolor genome and the diversification of grasses.</title>
        <authorList>
            <person name="Paterson A.H."/>
            <person name="Bowers J.E."/>
            <person name="Bruggmann R."/>
            <person name="Dubchak I."/>
            <person name="Grimwood J."/>
            <person name="Gundlach H."/>
            <person name="Haberer G."/>
            <person name="Hellsten U."/>
            <person name="Mitros T."/>
            <person name="Poliakov A."/>
            <person name="Schmutz J."/>
            <person name="Spannagl M."/>
            <person name="Tang H."/>
            <person name="Wang X."/>
            <person name="Wicker T."/>
            <person name="Bharti A.K."/>
            <person name="Chapman J."/>
            <person name="Feltus F.A."/>
            <person name="Gowik U."/>
            <person name="Grigoriev I.V."/>
            <person name="Lyons E."/>
            <person name="Maher C.A."/>
            <person name="Martis M."/>
            <person name="Narechania A."/>
            <person name="Otillar R.P."/>
            <person name="Penning B.W."/>
            <person name="Salamov A.A."/>
            <person name="Wang Y."/>
            <person name="Zhang L."/>
            <person name="Carpita N.C."/>
            <person name="Freeling M."/>
            <person name="Gingle A.R."/>
            <person name="Hash C.T."/>
            <person name="Keller B."/>
            <person name="Klein P."/>
            <person name="Kresovich S."/>
            <person name="McCann M.C."/>
            <person name="Ming R."/>
            <person name="Peterson D.G."/>
            <person name="Mehboob-ur-Rahman M."/>
            <person name="Ware D."/>
            <person name="Westhoff P."/>
            <person name="Mayer K.F.X."/>
            <person name="Messing J."/>
            <person name="Rokhsar D.S."/>
        </authorList>
    </citation>
    <scope>NUCLEOTIDE SEQUENCE [LARGE SCALE GENOMIC DNA]</scope>
    <source>
        <strain>cv. BTx623</strain>
    </source>
</reference>
<reference key="2">
    <citation type="journal article" date="2018" name="Plant J.">
        <title>The Sorghum bicolor reference genome: improved assembly, gene annotations, a transcriptome atlas, and signatures of genome organization.</title>
        <authorList>
            <person name="McCormick R.F."/>
            <person name="Truong S.K."/>
            <person name="Sreedasyam A."/>
            <person name="Jenkins J."/>
            <person name="Shu S."/>
            <person name="Sims D."/>
            <person name="Kennedy M."/>
            <person name="Amirebrahimi M."/>
            <person name="Weers B.D."/>
            <person name="McKinley B."/>
            <person name="Mattison A."/>
            <person name="Morishige D.T."/>
            <person name="Grimwood J."/>
            <person name="Schmutz J."/>
            <person name="Mullet J.E."/>
        </authorList>
    </citation>
    <scope>GENOME REANNOTATION</scope>
    <source>
        <strain>cv. BTx623</strain>
    </source>
</reference>
<reference key="3">
    <citation type="journal article" date="2014" name="Plant Physiol.">
        <title>Functional and evolutionary analysis of the CASPARIAN STRIP MEMBRANE DOMAIN PROTEIN family.</title>
        <authorList>
            <person name="Roppolo D."/>
            <person name="Boeckmann B."/>
            <person name="Pfister A."/>
            <person name="Boutet E."/>
            <person name="Rubio M.C."/>
            <person name="Denervaud-Tendon V."/>
            <person name="Vermeer J.E."/>
            <person name="Gheyselinck J."/>
            <person name="Xenarios I."/>
            <person name="Geldner N."/>
        </authorList>
    </citation>
    <scope>GENE FAMILY</scope>
    <scope>NOMENCLATURE</scope>
</reference>
<comment type="subunit">
    <text evidence="1">Homodimer and heterodimers.</text>
</comment>
<comment type="subcellular location">
    <subcellularLocation>
        <location evidence="1">Cell membrane</location>
        <topology evidence="1">Multi-pass membrane protein</topology>
    </subcellularLocation>
</comment>
<comment type="similarity">
    <text evidence="3">Belongs to the Casparian strip membrane proteins (CASP) family.</text>
</comment>
<protein>
    <recommendedName>
        <fullName>CASP-like protein 1U2</fullName>
        <shortName>SbCASPL1U2</shortName>
    </recommendedName>
</protein>
<gene>
    <name type="ordered locus">Sb05g019440</name>
</gene>
<dbReference type="EMBL" id="CM000764">
    <property type="protein sequence ID" value="EES09821.1"/>
    <property type="molecule type" value="Genomic_DNA"/>
</dbReference>
<dbReference type="SMR" id="C5Y376"/>
<dbReference type="FunCoup" id="C5Y376">
    <property type="interactions" value="820"/>
</dbReference>
<dbReference type="EnsemblPlants" id="EES09821">
    <property type="protein sequence ID" value="EES09821"/>
    <property type="gene ID" value="SORBI_3005G130800"/>
</dbReference>
<dbReference type="Gramene" id="EES09821">
    <property type="protein sequence ID" value="EES09821"/>
    <property type="gene ID" value="SORBI_3005G130800"/>
</dbReference>
<dbReference type="KEGG" id="sbi:8064776"/>
<dbReference type="eggNOG" id="ENOG502R6RW">
    <property type="taxonomic scope" value="Eukaryota"/>
</dbReference>
<dbReference type="HOGENOM" id="CLU_117400_0_0_1"/>
<dbReference type="InParanoid" id="C5Y376"/>
<dbReference type="OMA" id="QISACTG"/>
<dbReference type="OrthoDB" id="668094at2759"/>
<dbReference type="Proteomes" id="UP000000768">
    <property type="component" value="Chromosome 5"/>
</dbReference>
<dbReference type="GO" id="GO:0005886">
    <property type="term" value="C:plasma membrane"/>
    <property type="evidence" value="ECO:0007669"/>
    <property type="project" value="UniProtKB-SubCell"/>
</dbReference>
<dbReference type="InterPro" id="IPR006459">
    <property type="entry name" value="CASP/CASPL"/>
</dbReference>
<dbReference type="InterPro" id="IPR006702">
    <property type="entry name" value="CASP_dom"/>
</dbReference>
<dbReference type="InterPro" id="IPR044173">
    <property type="entry name" value="CASPL"/>
</dbReference>
<dbReference type="NCBIfam" id="TIGR01569">
    <property type="entry name" value="A_tha_TIGR01569"/>
    <property type="match status" value="1"/>
</dbReference>
<dbReference type="PANTHER" id="PTHR36488">
    <property type="entry name" value="CASP-LIKE PROTEIN 1U1"/>
    <property type="match status" value="1"/>
</dbReference>
<dbReference type="PANTHER" id="PTHR36488:SF1">
    <property type="entry name" value="CASP-LIKE PROTEIN 1U2"/>
    <property type="match status" value="1"/>
</dbReference>
<dbReference type="Pfam" id="PF04535">
    <property type="entry name" value="CASP_dom"/>
    <property type="match status" value="1"/>
</dbReference>
<organism>
    <name type="scientific">Sorghum bicolor</name>
    <name type="common">Sorghum</name>
    <name type="synonym">Sorghum vulgare</name>
    <dbReference type="NCBI Taxonomy" id="4558"/>
    <lineage>
        <taxon>Eukaryota</taxon>
        <taxon>Viridiplantae</taxon>
        <taxon>Streptophyta</taxon>
        <taxon>Embryophyta</taxon>
        <taxon>Tracheophyta</taxon>
        <taxon>Spermatophyta</taxon>
        <taxon>Magnoliopsida</taxon>
        <taxon>Liliopsida</taxon>
        <taxon>Poales</taxon>
        <taxon>Poaceae</taxon>
        <taxon>PACMAD clade</taxon>
        <taxon>Panicoideae</taxon>
        <taxon>Andropogonodae</taxon>
        <taxon>Andropogoneae</taxon>
        <taxon>Sorghinae</taxon>
        <taxon>Sorghum</taxon>
    </lineage>
</organism>
<proteinExistence type="evidence at transcript level"/>